<proteinExistence type="inferred from homology"/>
<keyword id="KW-0067">ATP-binding</keyword>
<keyword id="KW-0119">Carbohydrate metabolism</keyword>
<keyword id="KW-0418">Kinase</keyword>
<keyword id="KW-0460">Magnesium</keyword>
<keyword id="KW-0479">Metal-binding</keyword>
<keyword id="KW-0511">Multifunctional enzyme</keyword>
<keyword id="KW-0547">Nucleotide-binding</keyword>
<keyword id="KW-1185">Reference proteome</keyword>
<keyword id="KW-0723">Serine/threonine-protein kinase</keyword>
<keyword id="KW-0808">Transferase</keyword>
<reference key="1">
    <citation type="journal article" date="2009" name="BMC Genomics">
        <title>Evidence for niche adaptation in the genome of the bovine pathogen Streptococcus uberis.</title>
        <authorList>
            <person name="Ward P.N."/>
            <person name="Holden M.T.G."/>
            <person name="Leigh J.A."/>
            <person name="Lennard N."/>
            <person name="Bignell A."/>
            <person name="Barron A."/>
            <person name="Clark L."/>
            <person name="Quail M.A."/>
            <person name="Woodward J."/>
            <person name="Barrell B.G."/>
            <person name="Egan S.A."/>
            <person name="Field T.R."/>
            <person name="Maskell D."/>
            <person name="Kehoe M."/>
            <person name="Dowson C.G."/>
            <person name="Chanter N."/>
            <person name="Whatmore A.M."/>
            <person name="Bentley S.D."/>
            <person name="Parkhill J."/>
        </authorList>
    </citation>
    <scope>NUCLEOTIDE SEQUENCE [LARGE SCALE GENOMIC DNA]</scope>
    <source>
        <strain>ATCC BAA-854 / 0140J</strain>
    </source>
</reference>
<gene>
    <name evidence="1" type="primary">hprK</name>
    <name type="ordered locus">SUB0577</name>
</gene>
<sequence>MTVTVKKLIERLKLEIIYANDQLLEKEITTSDISRPGLEMTGYFDYYSPERIQLFGMKEWSYMTKMTAHNRYSVLREMFKKDTPAVIVSRDLPIPEEMVKAAEEEGIALLRSKISTSRLSGSISYYLDALLAERTSVHGVLMDIYGMGVLIQGDSGIGKSETGLELVKRGHRLVADDRVDVYAKDEETLWGEPAEILRHLLEIRGVGIIDVMSLYGASAVKDSSQVQLAIYLENFEAGKVFDRLGNGHEEVEFAGVKVPRIRIPVKTGRNVSVVIEAAAMNHRAKQMGFDATKTFEERLTNLISRNEEMK</sequence>
<protein>
    <recommendedName>
        <fullName evidence="1">HPr kinase/phosphorylase</fullName>
        <shortName evidence="1">HPrK/P</shortName>
        <ecNumber evidence="1">2.7.11.-</ecNumber>
        <ecNumber evidence="1">2.7.4.-</ecNumber>
    </recommendedName>
    <alternativeName>
        <fullName evidence="1">HPr(Ser) kinase/phosphorylase</fullName>
    </alternativeName>
</protein>
<accession>B9DRJ3</accession>
<name>HPRK_STRU0</name>
<dbReference type="EC" id="2.7.11.-" evidence="1"/>
<dbReference type="EC" id="2.7.4.-" evidence="1"/>
<dbReference type="EMBL" id="AM946015">
    <property type="protein sequence ID" value="CAR41370.1"/>
    <property type="molecule type" value="Genomic_DNA"/>
</dbReference>
<dbReference type="RefSeq" id="WP_012658102.1">
    <property type="nucleotide sequence ID" value="NC_012004.1"/>
</dbReference>
<dbReference type="SMR" id="B9DRJ3"/>
<dbReference type="STRING" id="218495.SUB0577"/>
<dbReference type="GeneID" id="93825866"/>
<dbReference type="KEGG" id="sub:SUB0577"/>
<dbReference type="eggNOG" id="COG1493">
    <property type="taxonomic scope" value="Bacteria"/>
</dbReference>
<dbReference type="HOGENOM" id="CLU_052030_0_1_9"/>
<dbReference type="OrthoDB" id="9778803at2"/>
<dbReference type="Proteomes" id="UP000000449">
    <property type="component" value="Chromosome"/>
</dbReference>
<dbReference type="GO" id="GO:0005524">
    <property type="term" value="F:ATP binding"/>
    <property type="evidence" value="ECO:0007669"/>
    <property type="project" value="UniProtKB-UniRule"/>
</dbReference>
<dbReference type="GO" id="GO:0000287">
    <property type="term" value="F:magnesium ion binding"/>
    <property type="evidence" value="ECO:0007669"/>
    <property type="project" value="UniProtKB-UniRule"/>
</dbReference>
<dbReference type="GO" id="GO:0000155">
    <property type="term" value="F:phosphorelay sensor kinase activity"/>
    <property type="evidence" value="ECO:0007669"/>
    <property type="project" value="InterPro"/>
</dbReference>
<dbReference type="GO" id="GO:0004674">
    <property type="term" value="F:protein serine/threonine kinase activity"/>
    <property type="evidence" value="ECO:0007669"/>
    <property type="project" value="UniProtKB-KW"/>
</dbReference>
<dbReference type="GO" id="GO:0004712">
    <property type="term" value="F:protein serine/threonine/tyrosine kinase activity"/>
    <property type="evidence" value="ECO:0007669"/>
    <property type="project" value="UniProtKB-UniRule"/>
</dbReference>
<dbReference type="GO" id="GO:0006109">
    <property type="term" value="P:regulation of carbohydrate metabolic process"/>
    <property type="evidence" value="ECO:0007669"/>
    <property type="project" value="UniProtKB-UniRule"/>
</dbReference>
<dbReference type="CDD" id="cd01918">
    <property type="entry name" value="HprK_C"/>
    <property type="match status" value="1"/>
</dbReference>
<dbReference type="FunFam" id="3.40.50.300:FF:000174">
    <property type="entry name" value="HPr kinase/phosphorylase"/>
    <property type="match status" value="1"/>
</dbReference>
<dbReference type="Gene3D" id="3.40.1390.20">
    <property type="entry name" value="HprK N-terminal domain-like"/>
    <property type="match status" value="1"/>
</dbReference>
<dbReference type="Gene3D" id="3.40.50.300">
    <property type="entry name" value="P-loop containing nucleotide triphosphate hydrolases"/>
    <property type="match status" value="1"/>
</dbReference>
<dbReference type="HAMAP" id="MF_01249">
    <property type="entry name" value="HPr_kinase"/>
    <property type="match status" value="1"/>
</dbReference>
<dbReference type="InterPro" id="IPR003755">
    <property type="entry name" value="HPr(Ser)_kin/Pase"/>
</dbReference>
<dbReference type="InterPro" id="IPR011104">
    <property type="entry name" value="Hpr_kin/Pase_C"/>
</dbReference>
<dbReference type="InterPro" id="IPR011126">
    <property type="entry name" value="Hpr_kin/Pase_Hpr_N"/>
</dbReference>
<dbReference type="InterPro" id="IPR027417">
    <property type="entry name" value="P-loop_NTPase"/>
</dbReference>
<dbReference type="InterPro" id="IPR028979">
    <property type="entry name" value="Ser_kin/Pase_Hpr-like_N_sf"/>
</dbReference>
<dbReference type="NCBIfam" id="TIGR00679">
    <property type="entry name" value="hpr-ser"/>
    <property type="match status" value="1"/>
</dbReference>
<dbReference type="PANTHER" id="PTHR30305:SF1">
    <property type="entry name" value="HPR KINASE_PHOSPHORYLASE"/>
    <property type="match status" value="1"/>
</dbReference>
<dbReference type="PANTHER" id="PTHR30305">
    <property type="entry name" value="PROTEIN YJDM-RELATED"/>
    <property type="match status" value="1"/>
</dbReference>
<dbReference type="Pfam" id="PF07475">
    <property type="entry name" value="Hpr_kinase_C"/>
    <property type="match status" value="1"/>
</dbReference>
<dbReference type="Pfam" id="PF02603">
    <property type="entry name" value="Hpr_kinase_N"/>
    <property type="match status" value="1"/>
</dbReference>
<dbReference type="SUPFAM" id="SSF75138">
    <property type="entry name" value="HprK N-terminal domain-like"/>
    <property type="match status" value="1"/>
</dbReference>
<dbReference type="SUPFAM" id="SSF53795">
    <property type="entry name" value="PEP carboxykinase-like"/>
    <property type="match status" value="1"/>
</dbReference>
<comment type="function">
    <text evidence="1">Catalyzes the ATP- as well as the pyrophosphate-dependent phosphorylation of a specific serine residue in HPr, a phosphocarrier protein of the phosphoenolpyruvate-dependent sugar phosphotransferase system (PTS). HprK/P also catalyzes the pyrophosphate-producing, inorganic phosphate-dependent dephosphorylation (phosphorolysis) of seryl-phosphorylated HPr (P-Ser-HPr). The two antagonistic activities of HprK/P are regulated by several intracellular metabolites, which change their concentration in response to the absence or presence of rapidly metabolisable carbon sources (glucose, fructose, etc.) in the growth medium. Therefore, by controlling the phosphorylation state of HPr, HPrK/P is a sensor enzyme that plays a major role in the regulation of carbon metabolism and sugar transport: it mediates carbon catabolite repression (CCR), and regulates PTS-catalyzed carbohydrate uptake and inducer exclusion.</text>
</comment>
<comment type="catalytic activity">
    <reaction evidence="1">
        <text>[HPr protein]-L-serine + ATP = [HPr protein]-O-phospho-L-serine + ADP + H(+)</text>
        <dbReference type="Rhea" id="RHEA:46600"/>
        <dbReference type="Rhea" id="RHEA-COMP:11602"/>
        <dbReference type="Rhea" id="RHEA-COMP:11603"/>
        <dbReference type="ChEBI" id="CHEBI:15378"/>
        <dbReference type="ChEBI" id="CHEBI:29999"/>
        <dbReference type="ChEBI" id="CHEBI:30616"/>
        <dbReference type="ChEBI" id="CHEBI:83421"/>
        <dbReference type="ChEBI" id="CHEBI:456216"/>
    </reaction>
</comment>
<comment type="catalytic activity">
    <reaction evidence="1">
        <text>[HPr protein]-O-phospho-L-serine + phosphate + H(+) = [HPr protein]-L-serine + diphosphate</text>
        <dbReference type="Rhea" id="RHEA:46604"/>
        <dbReference type="Rhea" id="RHEA-COMP:11602"/>
        <dbReference type="Rhea" id="RHEA-COMP:11603"/>
        <dbReference type="ChEBI" id="CHEBI:15378"/>
        <dbReference type="ChEBI" id="CHEBI:29999"/>
        <dbReference type="ChEBI" id="CHEBI:33019"/>
        <dbReference type="ChEBI" id="CHEBI:43474"/>
        <dbReference type="ChEBI" id="CHEBI:83421"/>
    </reaction>
</comment>
<comment type="cofactor">
    <cofactor evidence="1">
        <name>Mg(2+)</name>
        <dbReference type="ChEBI" id="CHEBI:18420"/>
    </cofactor>
</comment>
<comment type="subunit">
    <text evidence="1">Homohexamer.</text>
</comment>
<comment type="domain">
    <text evidence="1">The Walker A ATP-binding motif also binds Pi and PPi.</text>
</comment>
<comment type="miscellaneous">
    <text evidence="1">Both phosphorylation and phosphorolysis are carried out by the same active site and suggest a common mechanism for both reactions.</text>
</comment>
<comment type="similarity">
    <text evidence="1">Belongs to the HPrK/P family.</text>
</comment>
<evidence type="ECO:0000255" key="1">
    <source>
        <dbReference type="HAMAP-Rule" id="MF_01249"/>
    </source>
</evidence>
<feature type="chain" id="PRO_1000165078" description="HPr kinase/phosphorylase">
    <location>
        <begin position="1"/>
        <end position="310"/>
    </location>
</feature>
<feature type="region of interest" description="Important for the catalytic mechanism of both phosphorylation and dephosphorylation" evidence="1">
    <location>
        <begin position="201"/>
        <end position="210"/>
    </location>
</feature>
<feature type="region of interest" description="Important for the catalytic mechanism of dephosphorylation" evidence="1">
    <location>
        <begin position="264"/>
        <end position="269"/>
    </location>
</feature>
<feature type="active site" evidence="1">
    <location>
        <position position="138"/>
    </location>
</feature>
<feature type="active site" evidence="1">
    <location>
        <position position="159"/>
    </location>
</feature>
<feature type="active site" description="Proton acceptor; for phosphorylation activity. Proton donor; for dephosphorylation activity" evidence="1">
    <location>
        <position position="177"/>
    </location>
</feature>
<feature type="active site" evidence="1">
    <location>
        <position position="243"/>
    </location>
</feature>
<feature type="binding site" evidence="1">
    <location>
        <begin position="153"/>
        <end position="160"/>
    </location>
    <ligand>
        <name>ATP</name>
        <dbReference type="ChEBI" id="CHEBI:30616"/>
    </ligand>
</feature>
<feature type="binding site" evidence="1">
    <location>
        <position position="160"/>
    </location>
    <ligand>
        <name>Mg(2+)</name>
        <dbReference type="ChEBI" id="CHEBI:18420"/>
    </ligand>
</feature>
<feature type="binding site" evidence="1">
    <location>
        <position position="202"/>
    </location>
    <ligand>
        <name>Mg(2+)</name>
        <dbReference type="ChEBI" id="CHEBI:18420"/>
    </ligand>
</feature>
<organism>
    <name type="scientific">Streptococcus uberis (strain ATCC BAA-854 / 0140J)</name>
    <dbReference type="NCBI Taxonomy" id="218495"/>
    <lineage>
        <taxon>Bacteria</taxon>
        <taxon>Bacillati</taxon>
        <taxon>Bacillota</taxon>
        <taxon>Bacilli</taxon>
        <taxon>Lactobacillales</taxon>
        <taxon>Streptococcaceae</taxon>
        <taxon>Streptococcus</taxon>
    </lineage>
</organism>